<gene>
    <name evidence="1" type="primary">gatB</name>
    <name type="ordered locus">CKL_3470</name>
</gene>
<dbReference type="EC" id="6.3.5.-" evidence="1"/>
<dbReference type="EMBL" id="CP000673">
    <property type="protein sequence ID" value="EDK35461.1"/>
    <property type="molecule type" value="Genomic_DNA"/>
</dbReference>
<dbReference type="RefSeq" id="WP_012103792.1">
    <property type="nucleotide sequence ID" value="NC_009706.1"/>
</dbReference>
<dbReference type="SMR" id="A5N2W5"/>
<dbReference type="STRING" id="431943.CKL_3470"/>
<dbReference type="KEGG" id="ckl:CKL_3470"/>
<dbReference type="eggNOG" id="COG0064">
    <property type="taxonomic scope" value="Bacteria"/>
</dbReference>
<dbReference type="HOGENOM" id="CLU_019240_0_0_9"/>
<dbReference type="Proteomes" id="UP000002411">
    <property type="component" value="Chromosome"/>
</dbReference>
<dbReference type="GO" id="GO:0050566">
    <property type="term" value="F:asparaginyl-tRNA synthase (glutamine-hydrolyzing) activity"/>
    <property type="evidence" value="ECO:0007669"/>
    <property type="project" value="RHEA"/>
</dbReference>
<dbReference type="GO" id="GO:0005524">
    <property type="term" value="F:ATP binding"/>
    <property type="evidence" value="ECO:0007669"/>
    <property type="project" value="UniProtKB-KW"/>
</dbReference>
<dbReference type="GO" id="GO:0050567">
    <property type="term" value="F:glutaminyl-tRNA synthase (glutamine-hydrolyzing) activity"/>
    <property type="evidence" value="ECO:0007669"/>
    <property type="project" value="UniProtKB-UniRule"/>
</dbReference>
<dbReference type="GO" id="GO:0070681">
    <property type="term" value="P:glutaminyl-tRNAGln biosynthesis via transamidation"/>
    <property type="evidence" value="ECO:0007669"/>
    <property type="project" value="TreeGrafter"/>
</dbReference>
<dbReference type="GO" id="GO:0006412">
    <property type="term" value="P:translation"/>
    <property type="evidence" value="ECO:0007669"/>
    <property type="project" value="UniProtKB-UniRule"/>
</dbReference>
<dbReference type="FunFam" id="1.10.10.410:FF:000001">
    <property type="entry name" value="Aspartyl/glutamyl-tRNA(Asn/Gln) amidotransferase subunit B"/>
    <property type="match status" value="1"/>
</dbReference>
<dbReference type="Gene3D" id="1.10.10.410">
    <property type="match status" value="1"/>
</dbReference>
<dbReference type="Gene3D" id="1.10.150.380">
    <property type="entry name" value="GatB domain, N-terminal subdomain"/>
    <property type="match status" value="1"/>
</dbReference>
<dbReference type="HAMAP" id="MF_00121">
    <property type="entry name" value="GatB"/>
    <property type="match status" value="1"/>
</dbReference>
<dbReference type="InterPro" id="IPR017959">
    <property type="entry name" value="Asn/Gln-tRNA_amidoTrfase_suB/E"/>
</dbReference>
<dbReference type="InterPro" id="IPR006075">
    <property type="entry name" value="Asn/Gln-tRNA_Trfase_suB/E_cat"/>
</dbReference>
<dbReference type="InterPro" id="IPR018027">
    <property type="entry name" value="Asn/Gln_amidotransferase"/>
</dbReference>
<dbReference type="InterPro" id="IPR003789">
    <property type="entry name" value="Asn/Gln_tRNA_amidoTrase-B-like"/>
</dbReference>
<dbReference type="InterPro" id="IPR004413">
    <property type="entry name" value="GatB"/>
</dbReference>
<dbReference type="InterPro" id="IPR042114">
    <property type="entry name" value="GatB_C_1"/>
</dbReference>
<dbReference type="InterPro" id="IPR023168">
    <property type="entry name" value="GatB_Yqey_C_2"/>
</dbReference>
<dbReference type="InterPro" id="IPR017958">
    <property type="entry name" value="Gln-tRNA_amidoTrfase_suB_CS"/>
</dbReference>
<dbReference type="InterPro" id="IPR014746">
    <property type="entry name" value="Gln_synth/guanido_kin_cat_dom"/>
</dbReference>
<dbReference type="NCBIfam" id="TIGR00133">
    <property type="entry name" value="gatB"/>
    <property type="match status" value="1"/>
</dbReference>
<dbReference type="NCBIfam" id="NF004012">
    <property type="entry name" value="PRK05477.1-2"/>
    <property type="match status" value="1"/>
</dbReference>
<dbReference type="NCBIfam" id="NF004014">
    <property type="entry name" value="PRK05477.1-4"/>
    <property type="match status" value="1"/>
</dbReference>
<dbReference type="PANTHER" id="PTHR11659">
    <property type="entry name" value="GLUTAMYL-TRNA GLN AMIDOTRANSFERASE SUBUNIT B MITOCHONDRIAL AND PROKARYOTIC PET112-RELATED"/>
    <property type="match status" value="1"/>
</dbReference>
<dbReference type="PANTHER" id="PTHR11659:SF0">
    <property type="entry name" value="GLUTAMYL-TRNA(GLN) AMIDOTRANSFERASE SUBUNIT B, MITOCHONDRIAL"/>
    <property type="match status" value="1"/>
</dbReference>
<dbReference type="Pfam" id="PF02934">
    <property type="entry name" value="GatB_N"/>
    <property type="match status" value="1"/>
</dbReference>
<dbReference type="Pfam" id="PF02637">
    <property type="entry name" value="GatB_Yqey"/>
    <property type="match status" value="1"/>
</dbReference>
<dbReference type="SMART" id="SM00845">
    <property type="entry name" value="GatB_Yqey"/>
    <property type="match status" value="1"/>
</dbReference>
<dbReference type="SUPFAM" id="SSF89095">
    <property type="entry name" value="GatB/YqeY motif"/>
    <property type="match status" value="1"/>
</dbReference>
<dbReference type="SUPFAM" id="SSF55931">
    <property type="entry name" value="Glutamine synthetase/guanido kinase"/>
    <property type="match status" value="1"/>
</dbReference>
<dbReference type="PROSITE" id="PS01234">
    <property type="entry name" value="GATB"/>
    <property type="match status" value="1"/>
</dbReference>
<name>GATB_CLOK5</name>
<proteinExistence type="inferred from homology"/>
<comment type="function">
    <text evidence="1">Allows the formation of correctly charged Asn-tRNA(Asn) or Gln-tRNA(Gln) through the transamidation of misacylated Asp-tRNA(Asn) or Glu-tRNA(Gln) in organisms which lack either or both of asparaginyl-tRNA or glutaminyl-tRNA synthetases. The reaction takes place in the presence of glutamine and ATP through an activated phospho-Asp-tRNA(Asn) or phospho-Glu-tRNA(Gln).</text>
</comment>
<comment type="catalytic activity">
    <reaction evidence="1">
        <text>L-glutamyl-tRNA(Gln) + L-glutamine + ATP + H2O = L-glutaminyl-tRNA(Gln) + L-glutamate + ADP + phosphate + H(+)</text>
        <dbReference type="Rhea" id="RHEA:17521"/>
        <dbReference type="Rhea" id="RHEA-COMP:9681"/>
        <dbReference type="Rhea" id="RHEA-COMP:9684"/>
        <dbReference type="ChEBI" id="CHEBI:15377"/>
        <dbReference type="ChEBI" id="CHEBI:15378"/>
        <dbReference type="ChEBI" id="CHEBI:29985"/>
        <dbReference type="ChEBI" id="CHEBI:30616"/>
        <dbReference type="ChEBI" id="CHEBI:43474"/>
        <dbReference type="ChEBI" id="CHEBI:58359"/>
        <dbReference type="ChEBI" id="CHEBI:78520"/>
        <dbReference type="ChEBI" id="CHEBI:78521"/>
        <dbReference type="ChEBI" id="CHEBI:456216"/>
    </reaction>
</comment>
<comment type="catalytic activity">
    <reaction evidence="1">
        <text>L-aspartyl-tRNA(Asn) + L-glutamine + ATP + H2O = L-asparaginyl-tRNA(Asn) + L-glutamate + ADP + phosphate + 2 H(+)</text>
        <dbReference type="Rhea" id="RHEA:14513"/>
        <dbReference type="Rhea" id="RHEA-COMP:9674"/>
        <dbReference type="Rhea" id="RHEA-COMP:9677"/>
        <dbReference type="ChEBI" id="CHEBI:15377"/>
        <dbReference type="ChEBI" id="CHEBI:15378"/>
        <dbReference type="ChEBI" id="CHEBI:29985"/>
        <dbReference type="ChEBI" id="CHEBI:30616"/>
        <dbReference type="ChEBI" id="CHEBI:43474"/>
        <dbReference type="ChEBI" id="CHEBI:58359"/>
        <dbReference type="ChEBI" id="CHEBI:78515"/>
        <dbReference type="ChEBI" id="CHEBI:78516"/>
        <dbReference type="ChEBI" id="CHEBI:456216"/>
    </reaction>
</comment>
<comment type="subunit">
    <text evidence="1">Heterotrimer of A, B and C subunits.</text>
</comment>
<comment type="similarity">
    <text evidence="1">Belongs to the GatB/GatE family. GatB subfamily.</text>
</comment>
<sequence length="476" mass="54538">MEFEAVIGLEVHVELLTETKIYCGCSTAFGSEPNKHVCPVCLGLPGSLPRLNKKVVEYAIKAGLALNCSINNKSRMDRKNYFYADCPKNYQITQQEIPICREGFIEIRNHLGEKKRIGIERIHMEEDAGKLIHTDEGTLIDYNRAGIPLIEIVSKPDIRTSKEAVSYLEDLRNILKFIGVSDCKMEQGSLRCDCNISIRPKHNLKLGVKTEIKNMNSFKALEKAIQYEYKRQSDLIESGEKVRQETRRWNDAKNVTEVMRSKEYANDYRYFPEGDLTAINISDNYIDNIRKTIPELPDKKIDRFVEEFKISRKEIEILILNMEIGDFFENAAKLSGDPKSVSNWITGDISRLAKETGIPLNNLNFTERDLAELIEFINCGVISNNIGKKVIEEMFYKGKSPRQIIHEKGFVQNSSKEKILKVVKEVMEENPKSIEDYKKGKKKAVKFMIGMVMKKTKGNANPMLVNKLVEEEIGKY</sequence>
<protein>
    <recommendedName>
        <fullName evidence="1">Aspartyl/glutamyl-tRNA(Asn/Gln) amidotransferase subunit B</fullName>
        <shortName evidence="1">Asp/Glu-ADT subunit B</shortName>
        <ecNumber evidence="1">6.3.5.-</ecNumber>
    </recommendedName>
</protein>
<feature type="chain" id="PRO_1000076155" description="Aspartyl/glutamyl-tRNA(Asn/Gln) amidotransferase subunit B">
    <location>
        <begin position="1"/>
        <end position="476"/>
    </location>
</feature>
<evidence type="ECO:0000255" key="1">
    <source>
        <dbReference type="HAMAP-Rule" id="MF_00121"/>
    </source>
</evidence>
<organism>
    <name type="scientific">Clostridium kluyveri (strain ATCC 8527 / DSM 555 / NBRC 12016 / NCIMB 10680 / K1)</name>
    <dbReference type="NCBI Taxonomy" id="431943"/>
    <lineage>
        <taxon>Bacteria</taxon>
        <taxon>Bacillati</taxon>
        <taxon>Bacillota</taxon>
        <taxon>Clostridia</taxon>
        <taxon>Eubacteriales</taxon>
        <taxon>Clostridiaceae</taxon>
        <taxon>Clostridium</taxon>
    </lineage>
</organism>
<accession>A5N2W5</accession>
<keyword id="KW-0067">ATP-binding</keyword>
<keyword id="KW-0436">Ligase</keyword>
<keyword id="KW-0547">Nucleotide-binding</keyword>
<keyword id="KW-0648">Protein biosynthesis</keyword>
<keyword id="KW-1185">Reference proteome</keyword>
<reference key="1">
    <citation type="journal article" date="2008" name="Proc. Natl. Acad. Sci. U.S.A.">
        <title>The genome of Clostridium kluyveri, a strict anaerobe with unique metabolic features.</title>
        <authorList>
            <person name="Seedorf H."/>
            <person name="Fricke W.F."/>
            <person name="Veith B."/>
            <person name="Brueggemann H."/>
            <person name="Liesegang H."/>
            <person name="Strittmatter A."/>
            <person name="Miethke M."/>
            <person name="Buckel W."/>
            <person name="Hinderberger J."/>
            <person name="Li F."/>
            <person name="Hagemeier C."/>
            <person name="Thauer R.K."/>
            <person name="Gottschalk G."/>
        </authorList>
    </citation>
    <scope>NUCLEOTIDE SEQUENCE [LARGE SCALE GENOMIC DNA]</scope>
    <source>
        <strain>ATCC 8527 / DSM 555 / NBRC 12016 / NCIMB 10680 / K1</strain>
    </source>
</reference>